<accession>A6U2B0</accession>
<sequence>MYAYVKGKLTHLYPTHVVVETAGVGYEIQTPNSYRFQKHLDHEVLIRTSLIVREDAQLLYGFSSEEEKDMFLSLIKVTGIGPKSALAILATSTPNEVKRAIENENDTYLTKFPGIGKKTARQIVLDLKGKVKITEEDSDSLLQVDATSTVQDQFVQEAMLALEALGYSKRELAKVEKTLNKNKYDSVDEAVKAGLQLVVS</sequence>
<name>RUVA_STAA2</name>
<reference key="1">
    <citation type="submission" date="2007-06" db="EMBL/GenBank/DDBJ databases">
        <title>Complete sequence of chromosome of Staphylococcus aureus subsp. aureus JH1.</title>
        <authorList>
            <consortium name="US DOE Joint Genome Institute"/>
            <person name="Copeland A."/>
            <person name="Lucas S."/>
            <person name="Lapidus A."/>
            <person name="Barry K."/>
            <person name="Detter J.C."/>
            <person name="Glavina del Rio T."/>
            <person name="Hammon N."/>
            <person name="Israni S."/>
            <person name="Dalin E."/>
            <person name="Tice H."/>
            <person name="Pitluck S."/>
            <person name="Chain P."/>
            <person name="Malfatti S."/>
            <person name="Shin M."/>
            <person name="Vergez L."/>
            <person name="Schmutz J."/>
            <person name="Larimer F."/>
            <person name="Land M."/>
            <person name="Hauser L."/>
            <person name="Kyrpides N."/>
            <person name="Ivanova N."/>
            <person name="Tomasz A."/>
            <person name="Richardson P."/>
        </authorList>
    </citation>
    <scope>NUCLEOTIDE SEQUENCE [LARGE SCALE GENOMIC DNA]</scope>
    <source>
        <strain>JH1</strain>
    </source>
</reference>
<proteinExistence type="inferred from homology"/>
<keyword id="KW-0963">Cytoplasm</keyword>
<keyword id="KW-0227">DNA damage</keyword>
<keyword id="KW-0233">DNA recombination</keyword>
<keyword id="KW-0234">DNA repair</keyword>
<keyword id="KW-0238">DNA-binding</keyword>
<organism>
    <name type="scientific">Staphylococcus aureus (strain JH1)</name>
    <dbReference type="NCBI Taxonomy" id="359787"/>
    <lineage>
        <taxon>Bacteria</taxon>
        <taxon>Bacillati</taxon>
        <taxon>Bacillota</taxon>
        <taxon>Bacilli</taxon>
        <taxon>Bacillales</taxon>
        <taxon>Staphylococcaceae</taxon>
        <taxon>Staphylococcus</taxon>
    </lineage>
</organism>
<comment type="function">
    <text evidence="1">The RuvA-RuvB-RuvC complex processes Holliday junction (HJ) DNA during genetic recombination and DNA repair, while the RuvA-RuvB complex plays an important role in the rescue of blocked DNA replication forks via replication fork reversal (RFR). RuvA specifically binds to HJ cruciform DNA, conferring on it an open structure. The RuvB hexamer acts as an ATP-dependent pump, pulling dsDNA into and through the RuvAB complex. HJ branch migration allows RuvC to scan DNA until it finds its consensus sequence, where it cleaves and resolves the cruciform DNA.</text>
</comment>
<comment type="subunit">
    <text evidence="1">Homotetramer. Forms an RuvA(8)-RuvB(12)-Holliday junction (HJ) complex. HJ DNA is sandwiched between 2 RuvA tetramers; dsDNA enters through RuvA and exits via RuvB. An RuvB hexamer assembles on each DNA strand where it exits the tetramer. Each RuvB hexamer is contacted by two RuvA subunits (via domain III) on 2 adjacent RuvB subunits; this complex drives branch migration. In the full resolvosome a probable DNA-RuvA(4)-RuvB(12)-RuvC(2) complex forms which resolves the HJ.</text>
</comment>
<comment type="subcellular location">
    <subcellularLocation>
        <location evidence="1">Cytoplasm</location>
    </subcellularLocation>
</comment>
<comment type="domain">
    <text evidence="1">Has three domains with a flexible linker between the domains II and III and assumes an 'L' shape. Domain III is highly mobile and contacts RuvB.</text>
</comment>
<comment type="similarity">
    <text evidence="1">Belongs to the RuvA family.</text>
</comment>
<gene>
    <name evidence="1" type="primary">ruvA</name>
    <name type="ordered locus">SaurJH1_1732</name>
</gene>
<protein>
    <recommendedName>
        <fullName evidence="1">Holliday junction branch migration complex subunit RuvA</fullName>
    </recommendedName>
</protein>
<evidence type="ECO:0000255" key="1">
    <source>
        <dbReference type="HAMAP-Rule" id="MF_00031"/>
    </source>
</evidence>
<dbReference type="EMBL" id="CP000736">
    <property type="protein sequence ID" value="ABR52578.1"/>
    <property type="molecule type" value="Genomic_DNA"/>
</dbReference>
<dbReference type="SMR" id="A6U2B0"/>
<dbReference type="KEGG" id="sah:SaurJH1_1732"/>
<dbReference type="HOGENOM" id="CLU_087936_1_0_9"/>
<dbReference type="GO" id="GO:0005737">
    <property type="term" value="C:cytoplasm"/>
    <property type="evidence" value="ECO:0007669"/>
    <property type="project" value="UniProtKB-SubCell"/>
</dbReference>
<dbReference type="GO" id="GO:0009379">
    <property type="term" value="C:Holliday junction helicase complex"/>
    <property type="evidence" value="ECO:0007669"/>
    <property type="project" value="InterPro"/>
</dbReference>
<dbReference type="GO" id="GO:0048476">
    <property type="term" value="C:Holliday junction resolvase complex"/>
    <property type="evidence" value="ECO:0007669"/>
    <property type="project" value="UniProtKB-UniRule"/>
</dbReference>
<dbReference type="GO" id="GO:0005524">
    <property type="term" value="F:ATP binding"/>
    <property type="evidence" value="ECO:0007669"/>
    <property type="project" value="InterPro"/>
</dbReference>
<dbReference type="GO" id="GO:0000400">
    <property type="term" value="F:four-way junction DNA binding"/>
    <property type="evidence" value="ECO:0007669"/>
    <property type="project" value="UniProtKB-UniRule"/>
</dbReference>
<dbReference type="GO" id="GO:0009378">
    <property type="term" value="F:four-way junction helicase activity"/>
    <property type="evidence" value="ECO:0007669"/>
    <property type="project" value="InterPro"/>
</dbReference>
<dbReference type="GO" id="GO:0006310">
    <property type="term" value="P:DNA recombination"/>
    <property type="evidence" value="ECO:0007669"/>
    <property type="project" value="UniProtKB-UniRule"/>
</dbReference>
<dbReference type="GO" id="GO:0006281">
    <property type="term" value="P:DNA repair"/>
    <property type="evidence" value="ECO:0007669"/>
    <property type="project" value="UniProtKB-UniRule"/>
</dbReference>
<dbReference type="CDD" id="cd14332">
    <property type="entry name" value="UBA_RuvA_C"/>
    <property type="match status" value="1"/>
</dbReference>
<dbReference type="Gene3D" id="1.10.150.20">
    <property type="entry name" value="5' to 3' exonuclease, C-terminal subdomain"/>
    <property type="match status" value="1"/>
</dbReference>
<dbReference type="Gene3D" id="1.10.8.10">
    <property type="entry name" value="DNA helicase RuvA subunit, C-terminal domain"/>
    <property type="match status" value="1"/>
</dbReference>
<dbReference type="Gene3D" id="2.40.50.140">
    <property type="entry name" value="Nucleic acid-binding proteins"/>
    <property type="match status" value="1"/>
</dbReference>
<dbReference type="HAMAP" id="MF_00031">
    <property type="entry name" value="DNA_HJ_migration_RuvA"/>
    <property type="match status" value="1"/>
</dbReference>
<dbReference type="InterPro" id="IPR013849">
    <property type="entry name" value="DNA_helicase_Holl-junc_RuvA_I"/>
</dbReference>
<dbReference type="InterPro" id="IPR003583">
    <property type="entry name" value="Hlx-hairpin-Hlx_DNA-bd_motif"/>
</dbReference>
<dbReference type="InterPro" id="IPR012340">
    <property type="entry name" value="NA-bd_OB-fold"/>
</dbReference>
<dbReference type="InterPro" id="IPR000085">
    <property type="entry name" value="RuvA"/>
</dbReference>
<dbReference type="InterPro" id="IPR010994">
    <property type="entry name" value="RuvA_2-like"/>
</dbReference>
<dbReference type="InterPro" id="IPR011114">
    <property type="entry name" value="RuvA_C"/>
</dbReference>
<dbReference type="InterPro" id="IPR036267">
    <property type="entry name" value="RuvA_C_sf"/>
</dbReference>
<dbReference type="NCBIfam" id="TIGR00084">
    <property type="entry name" value="ruvA"/>
    <property type="match status" value="1"/>
</dbReference>
<dbReference type="Pfam" id="PF14520">
    <property type="entry name" value="HHH_5"/>
    <property type="match status" value="1"/>
</dbReference>
<dbReference type="Pfam" id="PF07499">
    <property type="entry name" value="RuvA_C"/>
    <property type="match status" value="1"/>
</dbReference>
<dbReference type="Pfam" id="PF01330">
    <property type="entry name" value="RuvA_N"/>
    <property type="match status" value="1"/>
</dbReference>
<dbReference type="SMART" id="SM00278">
    <property type="entry name" value="HhH1"/>
    <property type="match status" value="2"/>
</dbReference>
<dbReference type="SUPFAM" id="SSF46929">
    <property type="entry name" value="DNA helicase RuvA subunit, C-terminal domain"/>
    <property type="match status" value="1"/>
</dbReference>
<dbReference type="SUPFAM" id="SSF50249">
    <property type="entry name" value="Nucleic acid-binding proteins"/>
    <property type="match status" value="1"/>
</dbReference>
<dbReference type="SUPFAM" id="SSF47781">
    <property type="entry name" value="RuvA domain 2-like"/>
    <property type="match status" value="1"/>
</dbReference>
<feature type="chain" id="PRO_1000074441" description="Holliday junction branch migration complex subunit RuvA">
    <location>
        <begin position="1"/>
        <end position="200"/>
    </location>
</feature>
<feature type="region of interest" description="Domain I" evidence="1">
    <location>
        <begin position="1"/>
        <end position="63"/>
    </location>
</feature>
<feature type="region of interest" description="Domain II" evidence="1">
    <location>
        <begin position="64"/>
        <end position="142"/>
    </location>
</feature>
<feature type="region of interest" description="Flexible linker" evidence="1">
    <location>
        <begin position="143"/>
        <end position="149"/>
    </location>
</feature>
<feature type="region of interest" description="Domain III" evidence="1">
    <location>
        <begin position="150"/>
        <end position="200"/>
    </location>
</feature>